<evidence type="ECO:0000255" key="1">
    <source>
        <dbReference type="HAMAP-Rule" id="MF_00255"/>
    </source>
</evidence>
<keyword id="KW-0030">Aminoacyl-tRNA synthetase</keyword>
<keyword id="KW-0067">ATP-binding</keyword>
<keyword id="KW-0963">Cytoplasm</keyword>
<keyword id="KW-0436">Ligase</keyword>
<keyword id="KW-0547">Nucleotide-binding</keyword>
<keyword id="KW-0648">Protein biosynthesis</keyword>
<protein>
    <recommendedName>
        <fullName evidence="1">Glycine--tRNA ligase beta subunit</fullName>
        <ecNumber evidence="1">6.1.1.14</ecNumber>
    </recommendedName>
    <alternativeName>
        <fullName evidence="1">Glycyl-tRNA synthetase beta subunit</fullName>
        <shortName evidence="1">GlyRS</shortName>
    </alternativeName>
</protein>
<accession>Q0AEY2</accession>
<sequence length="715" mass="78565">MTTESLLIELLTEELPPKSLVKLGNAFATLIADSLKQQYLTTPDTVSTVFASPRRLAVHLTAISVQAPDQIVTLKLMPVAVGLDAQGQPTPALHKKLAALGVENVAVSALKRVQEGKAEMLFLEQSVTGILLAAGLQKAVDEAIRQLPVAKMMTYQLDDGWENVHFIRPAHGLIALHGQQIVPISALGFAAGNTTRGHRFEAKQAELVIDHADHYEYILETEGTVIPGFDRRRSRIREGLETATRAAQLQCIEDAALLDEVTALVERPNVLMGTFSADFLEVPQECLISTMKINQKYFPLLDADGKLTNRFLIVSNITPADPGQIIAGNERVIRSRLADAKFFFDHDRKRTLASRLPDLDKVIYHHQLGSQGERTRYVRALAQIIGQLLDNGDLPAQANQAAMLAKADLLTDMVGEFPELQGIMGRYYAQREGVDETIAFAIEDHYKPRFAGDALPRSMTGICVALADKLETLISLFSIGQFPTGDKDPYALRRHALGVIRILIEKDLPIGLDVLISRAAGVLRDEISGEQGPESSHARPVTPQLTEQLQDFFYDRLASSLRDQGYTVQEVESVLNLRPSLLCEIPRRLAAVRAFTALPEAASLAAANKRVSNILKKSEFDATVSIDKACLQAPAEIALYRALSEIESDARHAFQKGDYVTALQMLAALKAPIDAFFDQVMVNDENEVLRRNRLALLAALQATMNRVADISRLAA</sequence>
<name>SYGB_NITEC</name>
<organism>
    <name type="scientific">Nitrosomonas eutropha (strain DSM 101675 / C91 / Nm57)</name>
    <dbReference type="NCBI Taxonomy" id="335283"/>
    <lineage>
        <taxon>Bacteria</taxon>
        <taxon>Pseudomonadati</taxon>
        <taxon>Pseudomonadota</taxon>
        <taxon>Betaproteobacteria</taxon>
        <taxon>Nitrosomonadales</taxon>
        <taxon>Nitrosomonadaceae</taxon>
        <taxon>Nitrosomonas</taxon>
    </lineage>
</organism>
<reference key="1">
    <citation type="journal article" date="2007" name="Environ. Microbiol.">
        <title>Whole-genome analysis of the ammonia-oxidizing bacterium, Nitrosomonas eutropha C91: implications for niche adaptation.</title>
        <authorList>
            <person name="Stein L.Y."/>
            <person name="Arp D.J."/>
            <person name="Berube P.M."/>
            <person name="Chain P.S."/>
            <person name="Hauser L."/>
            <person name="Jetten M.S."/>
            <person name="Klotz M.G."/>
            <person name="Larimer F.W."/>
            <person name="Norton J.M."/>
            <person name="Op den Camp H.J.M."/>
            <person name="Shin M."/>
            <person name="Wei X."/>
        </authorList>
    </citation>
    <scope>NUCLEOTIDE SEQUENCE [LARGE SCALE GENOMIC DNA]</scope>
    <source>
        <strain>DSM 101675 / C91 / Nm57</strain>
    </source>
</reference>
<dbReference type="EC" id="6.1.1.14" evidence="1"/>
<dbReference type="EMBL" id="CP000450">
    <property type="protein sequence ID" value="ABI60100.1"/>
    <property type="molecule type" value="Genomic_DNA"/>
</dbReference>
<dbReference type="RefSeq" id="WP_011634903.1">
    <property type="nucleotide sequence ID" value="NC_008344.1"/>
</dbReference>
<dbReference type="SMR" id="Q0AEY2"/>
<dbReference type="STRING" id="335283.Neut_1868"/>
<dbReference type="KEGG" id="net:Neut_1868"/>
<dbReference type="eggNOG" id="COG0751">
    <property type="taxonomic scope" value="Bacteria"/>
</dbReference>
<dbReference type="HOGENOM" id="CLU_007220_2_2_4"/>
<dbReference type="OrthoDB" id="9775440at2"/>
<dbReference type="Proteomes" id="UP000001966">
    <property type="component" value="Chromosome"/>
</dbReference>
<dbReference type="GO" id="GO:0005829">
    <property type="term" value="C:cytosol"/>
    <property type="evidence" value="ECO:0007669"/>
    <property type="project" value="TreeGrafter"/>
</dbReference>
<dbReference type="GO" id="GO:0004814">
    <property type="term" value="F:arginine-tRNA ligase activity"/>
    <property type="evidence" value="ECO:0007669"/>
    <property type="project" value="InterPro"/>
</dbReference>
<dbReference type="GO" id="GO:0005524">
    <property type="term" value="F:ATP binding"/>
    <property type="evidence" value="ECO:0007669"/>
    <property type="project" value="UniProtKB-UniRule"/>
</dbReference>
<dbReference type="GO" id="GO:0004820">
    <property type="term" value="F:glycine-tRNA ligase activity"/>
    <property type="evidence" value="ECO:0007669"/>
    <property type="project" value="UniProtKB-UniRule"/>
</dbReference>
<dbReference type="GO" id="GO:0006420">
    <property type="term" value="P:arginyl-tRNA aminoacylation"/>
    <property type="evidence" value="ECO:0007669"/>
    <property type="project" value="InterPro"/>
</dbReference>
<dbReference type="GO" id="GO:0006426">
    <property type="term" value="P:glycyl-tRNA aminoacylation"/>
    <property type="evidence" value="ECO:0007669"/>
    <property type="project" value="UniProtKB-UniRule"/>
</dbReference>
<dbReference type="Gene3D" id="1.10.730.10">
    <property type="entry name" value="Isoleucyl-tRNA Synthetase, Domain 1"/>
    <property type="match status" value="1"/>
</dbReference>
<dbReference type="HAMAP" id="MF_00255">
    <property type="entry name" value="Gly_tRNA_synth_beta"/>
    <property type="match status" value="1"/>
</dbReference>
<dbReference type="InterPro" id="IPR008909">
    <property type="entry name" value="DALR_anticod-bd"/>
</dbReference>
<dbReference type="InterPro" id="IPR015944">
    <property type="entry name" value="Gly-tRNA-synth_bsu"/>
</dbReference>
<dbReference type="InterPro" id="IPR006194">
    <property type="entry name" value="Gly-tRNA-synth_heterodimer"/>
</dbReference>
<dbReference type="NCBIfam" id="TIGR00211">
    <property type="entry name" value="glyS"/>
    <property type="match status" value="1"/>
</dbReference>
<dbReference type="PANTHER" id="PTHR30075:SF2">
    <property type="entry name" value="GLYCINE--TRNA LIGASE, CHLOROPLASTIC_MITOCHONDRIAL 2"/>
    <property type="match status" value="1"/>
</dbReference>
<dbReference type="PANTHER" id="PTHR30075">
    <property type="entry name" value="GLYCYL-TRNA SYNTHETASE"/>
    <property type="match status" value="1"/>
</dbReference>
<dbReference type="Pfam" id="PF05746">
    <property type="entry name" value="DALR_1"/>
    <property type="match status" value="1"/>
</dbReference>
<dbReference type="Pfam" id="PF02092">
    <property type="entry name" value="tRNA_synt_2f"/>
    <property type="match status" value="1"/>
</dbReference>
<dbReference type="PRINTS" id="PR01045">
    <property type="entry name" value="TRNASYNTHGB"/>
</dbReference>
<dbReference type="SMART" id="SM00836">
    <property type="entry name" value="DALR_1"/>
    <property type="match status" value="1"/>
</dbReference>
<dbReference type="SUPFAM" id="SSF109604">
    <property type="entry name" value="HD-domain/PDEase-like"/>
    <property type="match status" value="1"/>
</dbReference>
<dbReference type="PROSITE" id="PS50861">
    <property type="entry name" value="AA_TRNA_LIGASE_II_GLYAB"/>
    <property type="match status" value="1"/>
</dbReference>
<comment type="catalytic activity">
    <reaction evidence="1">
        <text>tRNA(Gly) + glycine + ATP = glycyl-tRNA(Gly) + AMP + diphosphate</text>
        <dbReference type="Rhea" id="RHEA:16013"/>
        <dbReference type="Rhea" id="RHEA-COMP:9664"/>
        <dbReference type="Rhea" id="RHEA-COMP:9683"/>
        <dbReference type="ChEBI" id="CHEBI:30616"/>
        <dbReference type="ChEBI" id="CHEBI:33019"/>
        <dbReference type="ChEBI" id="CHEBI:57305"/>
        <dbReference type="ChEBI" id="CHEBI:78442"/>
        <dbReference type="ChEBI" id="CHEBI:78522"/>
        <dbReference type="ChEBI" id="CHEBI:456215"/>
        <dbReference type="EC" id="6.1.1.14"/>
    </reaction>
</comment>
<comment type="subunit">
    <text evidence="1">Tetramer of two alpha and two beta subunits.</text>
</comment>
<comment type="subcellular location">
    <subcellularLocation>
        <location evidence="1">Cytoplasm</location>
    </subcellularLocation>
</comment>
<comment type="similarity">
    <text evidence="1">Belongs to the class-II aminoacyl-tRNA synthetase family.</text>
</comment>
<gene>
    <name evidence="1" type="primary">glyS</name>
    <name type="ordered locus">Neut_1868</name>
</gene>
<proteinExistence type="inferred from homology"/>
<feature type="chain" id="PRO_1000101310" description="Glycine--tRNA ligase beta subunit">
    <location>
        <begin position="1"/>
        <end position="715"/>
    </location>
</feature>